<dbReference type="EC" id="2.4.2.29" evidence="1"/>
<dbReference type="EMBL" id="CP000766">
    <property type="protein sequence ID" value="ABY73052.1"/>
    <property type="molecule type" value="Genomic_DNA"/>
</dbReference>
<dbReference type="RefSeq" id="WP_012151231.1">
    <property type="nucleotide sequence ID" value="NC_010263.3"/>
</dbReference>
<dbReference type="SMR" id="B0BUZ2"/>
<dbReference type="GeneID" id="79937744"/>
<dbReference type="KEGG" id="rrj:RrIowa_1308"/>
<dbReference type="eggNOG" id="COG0343">
    <property type="taxonomic scope" value="Bacteria"/>
</dbReference>
<dbReference type="HOGENOM" id="CLU_022060_0_1_5"/>
<dbReference type="UniPathway" id="UPA00392"/>
<dbReference type="Proteomes" id="UP000000796">
    <property type="component" value="Chromosome"/>
</dbReference>
<dbReference type="GO" id="GO:0005737">
    <property type="term" value="C:cytoplasm"/>
    <property type="evidence" value="ECO:0007669"/>
    <property type="project" value="TreeGrafter"/>
</dbReference>
<dbReference type="GO" id="GO:0046872">
    <property type="term" value="F:metal ion binding"/>
    <property type="evidence" value="ECO:0007669"/>
    <property type="project" value="UniProtKB-KW"/>
</dbReference>
<dbReference type="GO" id="GO:0008479">
    <property type="term" value="F:tRNA-guanosine(34) queuine transglycosylase activity"/>
    <property type="evidence" value="ECO:0007669"/>
    <property type="project" value="UniProtKB-UniRule"/>
</dbReference>
<dbReference type="GO" id="GO:0008616">
    <property type="term" value="P:queuosine biosynthetic process"/>
    <property type="evidence" value="ECO:0007669"/>
    <property type="project" value="UniProtKB-UniRule"/>
</dbReference>
<dbReference type="GO" id="GO:0002099">
    <property type="term" value="P:tRNA wobble guanine modification"/>
    <property type="evidence" value="ECO:0007669"/>
    <property type="project" value="TreeGrafter"/>
</dbReference>
<dbReference type="GO" id="GO:0101030">
    <property type="term" value="P:tRNA-guanine transglycosylation"/>
    <property type="evidence" value="ECO:0007669"/>
    <property type="project" value="InterPro"/>
</dbReference>
<dbReference type="FunFam" id="3.20.20.105:FF:000001">
    <property type="entry name" value="Queuine tRNA-ribosyltransferase"/>
    <property type="match status" value="1"/>
</dbReference>
<dbReference type="Gene3D" id="3.20.20.105">
    <property type="entry name" value="Queuine tRNA-ribosyltransferase-like"/>
    <property type="match status" value="1"/>
</dbReference>
<dbReference type="HAMAP" id="MF_00168">
    <property type="entry name" value="Q_tRNA_Tgt"/>
    <property type="match status" value="1"/>
</dbReference>
<dbReference type="InterPro" id="IPR050076">
    <property type="entry name" value="ArchSynthase1/Queuine_TRR"/>
</dbReference>
<dbReference type="InterPro" id="IPR004803">
    <property type="entry name" value="TGT"/>
</dbReference>
<dbReference type="InterPro" id="IPR036511">
    <property type="entry name" value="TGT-like_sf"/>
</dbReference>
<dbReference type="InterPro" id="IPR002616">
    <property type="entry name" value="tRNA_ribo_trans-like"/>
</dbReference>
<dbReference type="NCBIfam" id="TIGR00430">
    <property type="entry name" value="Q_tRNA_tgt"/>
    <property type="match status" value="1"/>
</dbReference>
<dbReference type="NCBIfam" id="TIGR00449">
    <property type="entry name" value="tgt_general"/>
    <property type="match status" value="1"/>
</dbReference>
<dbReference type="PANTHER" id="PTHR46499">
    <property type="entry name" value="QUEUINE TRNA-RIBOSYLTRANSFERASE"/>
    <property type="match status" value="1"/>
</dbReference>
<dbReference type="PANTHER" id="PTHR46499:SF1">
    <property type="entry name" value="QUEUINE TRNA-RIBOSYLTRANSFERASE"/>
    <property type="match status" value="1"/>
</dbReference>
<dbReference type="Pfam" id="PF01702">
    <property type="entry name" value="TGT"/>
    <property type="match status" value="1"/>
</dbReference>
<dbReference type="SUPFAM" id="SSF51713">
    <property type="entry name" value="tRNA-guanine transglycosylase"/>
    <property type="match status" value="1"/>
</dbReference>
<proteinExistence type="inferred from homology"/>
<keyword id="KW-0328">Glycosyltransferase</keyword>
<keyword id="KW-0479">Metal-binding</keyword>
<keyword id="KW-0671">Queuosine biosynthesis</keyword>
<keyword id="KW-0808">Transferase</keyword>
<keyword id="KW-0819">tRNA processing</keyword>
<keyword id="KW-0862">Zinc</keyword>
<name>TGT_RICRO</name>
<feature type="chain" id="PRO_1000077014" description="Queuine tRNA-ribosyltransferase">
    <location>
        <begin position="1"/>
        <end position="361"/>
    </location>
</feature>
<feature type="region of interest" description="RNA binding" evidence="1">
    <location>
        <begin position="247"/>
        <end position="253"/>
    </location>
</feature>
<feature type="region of interest" description="RNA binding; important for wobble base 34 recognition" evidence="1">
    <location>
        <begin position="271"/>
        <end position="275"/>
    </location>
</feature>
<feature type="active site" description="Proton acceptor" evidence="1">
    <location>
        <position position="92"/>
    </location>
</feature>
<feature type="active site" description="Nucleophile" evidence="1">
    <location>
        <position position="266"/>
    </location>
</feature>
<feature type="binding site" evidence="1">
    <location>
        <begin position="92"/>
        <end position="96"/>
    </location>
    <ligand>
        <name>substrate</name>
    </ligand>
</feature>
<feature type="binding site" evidence="1">
    <location>
        <position position="146"/>
    </location>
    <ligand>
        <name>substrate</name>
    </ligand>
</feature>
<feature type="binding site" evidence="1">
    <location>
        <position position="189"/>
    </location>
    <ligand>
        <name>substrate</name>
    </ligand>
</feature>
<feature type="binding site" evidence="1">
    <location>
        <position position="216"/>
    </location>
    <ligand>
        <name>substrate</name>
    </ligand>
</feature>
<feature type="binding site" evidence="1">
    <location>
        <position position="304"/>
    </location>
    <ligand>
        <name>Zn(2+)</name>
        <dbReference type="ChEBI" id="CHEBI:29105"/>
    </ligand>
</feature>
<feature type="binding site" evidence="1">
    <location>
        <position position="306"/>
    </location>
    <ligand>
        <name>Zn(2+)</name>
        <dbReference type="ChEBI" id="CHEBI:29105"/>
    </ligand>
</feature>
<feature type="binding site" evidence="1">
    <location>
        <position position="309"/>
    </location>
    <ligand>
        <name>Zn(2+)</name>
        <dbReference type="ChEBI" id="CHEBI:29105"/>
    </ligand>
</feature>
<feature type="binding site" evidence="1">
    <location>
        <position position="335"/>
    </location>
    <ligand>
        <name>Zn(2+)</name>
        <dbReference type="ChEBI" id="CHEBI:29105"/>
    </ligand>
</feature>
<comment type="function">
    <text evidence="1">Catalyzes the base-exchange of a guanine (G) residue with the queuine precursor 7-aminomethyl-7-deazaguanine (PreQ1) at position 34 (anticodon wobble position) in tRNAs with GU(N) anticodons (tRNA-Asp, -Asn, -His and -Tyr). Catalysis occurs through a double-displacement mechanism. The nucleophile active site attacks the C1' of nucleotide 34 to detach the guanine base from the RNA, forming a covalent enzyme-RNA intermediate. The proton acceptor active site deprotonates the incoming PreQ1, allowing a nucleophilic attack on the C1' of the ribose to form the product. After dissociation, two additional enzymatic reactions on the tRNA convert PreQ1 to queuine (Q), resulting in the hypermodified nucleoside queuosine (7-(((4,5-cis-dihydroxy-2-cyclopenten-1-yl)amino)methyl)-7-deazaguanosine).</text>
</comment>
<comment type="catalytic activity">
    <reaction evidence="1">
        <text>7-aminomethyl-7-carbaguanine + guanosine(34) in tRNA = 7-aminomethyl-7-carbaguanosine(34) in tRNA + guanine</text>
        <dbReference type="Rhea" id="RHEA:24104"/>
        <dbReference type="Rhea" id="RHEA-COMP:10341"/>
        <dbReference type="Rhea" id="RHEA-COMP:10342"/>
        <dbReference type="ChEBI" id="CHEBI:16235"/>
        <dbReference type="ChEBI" id="CHEBI:58703"/>
        <dbReference type="ChEBI" id="CHEBI:74269"/>
        <dbReference type="ChEBI" id="CHEBI:82833"/>
        <dbReference type="EC" id="2.4.2.29"/>
    </reaction>
</comment>
<comment type="cofactor">
    <cofactor evidence="1">
        <name>Zn(2+)</name>
        <dbReference type="ChEBI" id="CHEBI:29105"/>
    </cofactor>
    <text evidence="1">Binds 1 zinc ion per subunit.</text>
</comment>
<comment type="pathway">
    <text evidence="1">tRNA modification; tRNA-queuosine biosynthesis.</text>
</comment>
<comment type="subunit">
    <text evidence="1">Homodimer. Within each dimer, one monomer is responsible for RNA recognition and catalysis, while the other monomer binds to the replacement base PreQ1.</text>
</comment>
<comment type="similarity">
    <text evidence="1">Belongs to the queuine tRNA-ribosyltransferase family.</text>
</comment>
<reference key="1">
    <citation type="journal article" date="2008" name="Infect. Immun.">
        <title>Genomic comparison of virulent Rickettsia rickettsii Sheila Smith and avirulent Rickettsia rickettsii Iowa.</title>
        <authorList>
            <person name="Ellison D.W."/>
            <person name="Clark T.R."/>
            <person name="Sturdevant D.E."/>
            <person name="Virtaneva K."/>
            <person name="Porcella S.F."/>
            <person name="Hackstadt T."/>
        </authorList>
    </citation>
    <scope>NUCLEOTIDE SEQUENCE [LARGE SCALE GENOMIC DNA]</scope>
    <source>
        <strain>Iowa</strain>
    </source>
</reference>
<gene>
    <name evidence="1" type="primary">tgt</name>
    <name type="ordered locus">RrIowa_1308</name>
</gene>
<accession>B0BUZ2</accession>
<organism>
    <name type="scientific">Rickettsia rickettsii (strain Iowa)</name>
    <dbReference type="NCBI Taxonomy" id="452659"/>
    <lineage>
        <taxon>Bacteria</taxon>
        <taxon>Pseudomonadati</taxon>
        <taxon>Pseudomonadota</taxon>
        <taxon>Alphaproteobacteria</taxon>
        <taxon>Rickettsiales</taxon>
        <taxon>Rickettsiaceae</taxon>
        <taxon>Rickettsieae</taxon>
        <taxon>Rickettsia</taxon>
        <taxon>spotted fever group</taxon>
    </lineage>
</organism>
<evidence type="ECO:0000255" key="1">
    <source>
        <dbReference type="HAMAP-Rule" id="MF_00168"/>
    </source>
</evidence>
<sequence>MSKFSFNIHHQHKKARSGIIVTAHGEMRTPAFMPVGTRGTVKAMLPESVAETGADILLGNTYHLMLQPTAERIVQLGGLHKFMNWDKPILTDSGGFQVMSLSKLCKITEEGVSFSSHINGDKYMLTPERSTEIQYLLGSTITMAFDECTPYPATFEEAKTSMQLTTRWANRSRNTFVKREGYAQFGIIQGSVYEELREQSAKDLVELDFDGYAIGGLAVGEGQELMFKVLDYAPDFLPQNKPRYLMGVGKPADIIGAVSRGIDMFDCVIPTRSGRNGQAFTKYGTVNIRNSKYADDNKPLEHDCLCPACRNYSKAYLHHLVRIGEILGSMLMTWHNLTYFQNLMSRIRAYIKLGKDFDFDS</sequence>
<protein>
    <recommendedName>
        <fullName evidence="1">Queuine tRNA-ribosyltransferase</fullName>
        <ecNumber evidence="1">2.4.2.29</ecNumber>
    </recommendedName>
    <alternativeName>
        <fullName evidence="1">Guanine insertion enzyme</fullName>
    </alternativeName>
    <alternativeName>
        <fullName evidence="1">tRNA-guanine transglycosylase</fullName>
    </alternativeName>
</protein>